<sequence>MSRIELGGVLGKTFGKVHHRLISRVSEAGVALAKTVPGFEQFMISSQRRGLTYSVFKGKKNIGVDDLGFPVTGDVIRIVPVIIGSKKAGVLQTILGAVLVAVGVVLNFTPWAAASPFFYKLGAAVMLGGVVQMLSPQPAGLASKQSSDNRASYAFGGVTNTAAQGYPVPLLYGRRRIGGAIISAGIYVEDQQ</sequence>
<accession>O64334</accession>
<organism evidence="5">
    <name type="scientific">Escherichia phage N15</name>
    <name type="common">Bacteriophage N15</name>
    <dbReference type="NCBI Taxonomy" id="1604876"/>
    <lineage>
        <taxon>Viruses</taxon>
        <taxon>Duplodnaviria</taxon>
        <taxon>Heunggongvirae</taxon>
        <taxon>Uroviricota</taxon>
        <taxon>Caudoviricetes</taxon>
        <taxon>Ravinvirus</taxon>
        <taxon>Ravinvirus N15</taxon>
    </lineage>
</organism>
<name>TIPI_BPN15</name>
<protein>
    <recommendedName>
        <fullName evidence="2">Tail tip assembly protein I</fullName>
    </recommendedName>
    <alternativeName>
        <fullName evidence="3">Gene product 20</fullName>
        <shortName evidence="3">gp20</shortName>
    </alternativeName>
</protein>
<organismHost>
    <name type="scientific">Escherichia coli</name>
    <dbReference type="NCBI Taxonomy" id="562"/>
</organismHost>
<dbReference type="EMBL" id="AF064539">
    <property type="protein sequence ID" value="AAC19056.1"/>
    <property type="molecule type" value="Genomic_DNA"/>
</dbReference>
<dbReference type="PIR" id="T13106">
    <property type="entry name" value="T13106"/>
</dbReference>
<dbReference type="RefSeq" id="NP_046915.1">
    <property type="nucleotide sequence ID" value="NC_001901.1"/>
</dbReference>
<dbReference type="SMR" id="O64334"/>
<dbReference type="GeneID" id="1261659"/>
<dbReference type="KEGG" id="vg:1261659"/>
<dbReference type="Proteomes" id="UP000002132">
    <property type="component" value="Genome"/>
</dbReference>
<dbReference type="GO" id="GO:0030430">
    <property type="term" value="C:host cell cytoplasm"/>
    <property type="evidence" value="ECO:0007669"/>
    <property type="project" value="UniProtKB-SubCell"/>
</dbReference>
<dbReference type="GO" id="GO:0098003">
    <property type="term" value="P:viral tail assembly"/>
    <property type="evidence" value="ECO:0007669"/>
    <property type="project" value="UniProtKB-KW"/>
</dbReference>
<feature type="chain" id="PRO_0000432901" description="Tail tip assembly protein I">
    <location>
        <begin position="1"/>
        <end position="192"/>
    </location>
</feature>
<keyword id="KW-1035">Host cytoplasm</keyword>
<keyword id="KW-0426">Late protein</keyword>
<keyword id="KW-1185">Reference proteome</keyword>
<keyword id="KW-1188">Viral release from host cell</keyword>
<keyword id="KW-1245">Viral tail assembly</keyword>
<gene>
    <name evidence="4" type="primary">gene 20</name>
</gene>
<proteinExistence type="inferred from homology"/>
<comment type="function">
    <text evidence="1">Plays a role in tail tip complex assembly. The tail tip complex is assembled successively with three tail tip proteins J, one tail tip protein I, one tail tip protein L and one tail tip protein K. The tail tip complex interacts with tail measure protein to initiate tail tube assembly. The formation of the tail tip complex is completed by the addition of tail tip protein M, which is followed by tail tube polymerization. May be excluded form tail tip during maturation and would be absent from virions.</text>
</comment>
<comment type="subcellular location">
    <subcellularLocation>
        <location evidence="1">Host cytoplasm</location>
    </subcellularLocation>
</comment>
<comment type="similarity">
    <text evidence="3">Belongs to the lambda-like tail tip protein I family.</text>
</comment>
<evidence type="ECO:0000250" key="1">
    <source>
        <dbReference type="UniProtKB" id="P03730"/>
    </source>
</evidence>
<evidence type="ECO:0000303" key="2">
    <source>
    </source>
</evidence>
<evidence type="ECO:0000305" key="3"/>
<evidence type="ECO:0000312" key="4">
    <source>
        <dbReference type="EMBL" id="AAC19056.1"/>
    </source>
</evidence>
<evidence type="ECO:0000312" key="5">
    <source>
        <dbReference type="Proteomes" id="UP000002132"/>
    </source>
</evidence>
<reference key="1">
    <citation type="journal article" date="2000" name="J. Mol. Biol.">
        <title>Genomic sequence and analysis of the atypical temperate bacteriophage N15.</title>
        <authorList>
            <person name="Ravin V."/>
            <person name="Ravin N."/>
            <person name="Casjens S."/>
            <person name="Ford M.E."/>
            <person name="Hatfull G.F."/>
            <person name="Hendrix R.W."/>
        </authorList>
    </citation>
    <scope>NUCLEOTIDE SEQUENCE [LARGE SCALE GENOMIC DNA]</scope>
    <scope>IDENTIFICATION</scope>
</reference>